<accession>Q8FLA7</accession>
<keyword id="KW-1185">Reference proteome</keyword>
<keyword id="KW-0677">Repeat</keyword>
<keyword id="KW-0808">Transferase</keyword>
<comment type="function">
    <text evidence="1">Overproduction of CaiE stimulates the activity of CaiB and CaiD.</text>
</comment>
<comment type="pathway">
    <text evidence="1">Amine and polyamine metabolism; carnitine metabolism.</text>
</comment>
<comment type="similarity">
    <text evidence="1">Belongs to the transferase hexapeptide repeat family.</text>
</comment>
<comment type="sequence caution" evidence="3">
    <conflict type="erroneous initiation">
        <sequence resource="EMBL-CDS" id="AAN78542"/>
    </conflict>
</comment>
<reference key="1">
    <citation type="journal article" date="2002" name="Proc. Natl. Acad. Sci. U.S.A.">
        <title>Extensive mosaic structure revealed by the complete genome sequence of uropathogenic Escherichia coli.</title>
        <authorList>
            <person name="Welch R.A."/>
            <person name="Burland V."/>
            <person name="Plunkett G. III"/>
            <person name="Redford P."/>
            <person name="Roesch P."/>
            <person name="Rasko D."/>
            <person name="Buckles E.L."/>
            <person name="Liou S.-R."/>
            <person name="Boutin A."/>
            <person name="Hackett J."/>
            <person name="Stroud D."/>
            <person name="Mayhew G.F."/>
            <person name="Rose D.J."/>
            <person name="Zhou S."/>
            <person name="Schwartz D.C."/>
            <person name="Perna N.T."/>
            <person name="Mobley H.L.T."/>
            <person name="Donnenberg M.S."/>
            <person name="Blattner F.R."/>
        </authorList>
    </citation>
    <scope>NUCLEOTIDE SEQUENCE [LARGE SCALE GENOMIC DNA]</scope>
    <source>
        <strain>CFT073 / ATCC 700928 / UPEC</strain>
    </source>
</reference>
<feature type="chain" id="PRO_0000068720" description="Carnitine operon protein CaiE">
    <location>
        <begin position="1"/>
        <end position="196"/>
    </location>
</feature>
<feature type="region of interest" description="Disordered" evidence="2">
    <location>
        <begin position="173"/>
        <end position="196"/>
    </location>
</feature>
<feature type="compositionally biased region" description="Polar residues" evidence="2">
    <location>
        <begin position="187"/>
        <end position="196"/>
    </location>
</feature>
<name>CAIE_ECOL6</name>
<proteinExistence type="inferred from homology"/>
<dbReference type="EMBL" id="AE014075">
    <property type="protein sequence ID" value="AAN78542.1"/>
    <property type="status" value="ALT_INIT"/>
    <property type="molecule type" value="Genomic_DNA"/>
</dbReference>
<dbReference type="RefSeq" id="WP_000122880.1">
    <property type="nucleotide sequence ID" value="NZ_CP051263.1"/>
</dbReference>
<dbReference type="SMR" id="Q8FLA7"/>
<dbReference type="STRING" id="199310.c0044"/>
<dbReference type="KEGG" id="ecc:c0044"/>
<dbReference type="eggNOG" id="COG0663">
    <property type="taxonomic scope" value="Bacteria"/>
</dbReference>
<dbReference type="HOGENOM" id="CLU_064827_4_2_6"/>
<dbReference type="UniPathway" id="UPA00117"/>
<dbReference type="Proteomes" id="UP000001410">
    <property type="component" value="Chromosome"/>
</dbReference>
<dbReference type="GO" id="GO:0016740">
    <property type="term" value="F:transferase activity"/>
    <property type="evidence" value="ECO:0007669"/>
    <property type="project" value="UniProtKB-KW"/>
</dbReference>
<dbReference type="GO" id="GO:0009437">
    <property type="term" value="P:carnitine metabolic process"/>
    <property type="evidence" value="ECO:0007669"/>
    <property type="project" value="UniProtKB-UniRule"/>
</dbReference>
<dbReference type="CDD" id="cd04745">
    <property type="entry name" value="LbH_paaY_like"/>
    <property type="match status" value="1"/>
</dbReference>
<dbReference type="FunFam" id="2.160.10.10:FF:000012">
    <property type="entry name" value="Carnitine operon protein CaiE"/>
    <property type="match status" value="1"/>
</dbReference>
<dbReference type="Gene3D" id="2.160.10.10">
    <property type="entry name" value="Hexapeptide repeat proteins"/>
    <property type="match status" value="1"/>
</dbReference>
<dbReference type="HAMAP" id="MF_01525">
    <property type="entry name" value="CaiE"/>
    <property type="match status" value="1"/>
</dbReference>
<dbReference type="InterPro" id="IPR023446">
    <property type="entry name" value="CaiE"/>
</dbReference>
<dbReference type="InterPro" id="IPR001451">
    <property type="entry name" value="Hexapep"/>
</dbReference>
<dbReference type="InterPro" id="IPR050484">
    <property type="entry name" value="Transf_Hexapept/Carb_Anhydrase"/>
</dbReference>
<dbReference type="InterPro" id="IPR011004">
    <property type="entry name" value="Trimer_LpxA-like_sf"/>
</dbReference>
<dbReference type="NCBIfam" id="NF010150">
    <property type="entry name" value="PRK13627.1"/>
    <property type="match status" value="1"/>
</dbReference>
<dbReference type="PANTHER" id="PTHR13061">
    <property type="entry name" value="DYNACTIN SUBUNIT P25"/>
    <property type="match status" value="1"/>
</dbReference>
<dbReference type="PANTHER" id="PTHR13061:SF29">
    <property type="entry name" value="GAMMA CARBONIC ANHYDRASE-LIKE 1, MITOCHONDRIAL-RELATED"/>
    <property type="match status" value="1"/>
</dbReference>
<dbReference type="Pfam" id="PF00132">
    <property type="entry name" value="Hexapep"/>
    <property type="match status" value="1"/>
</dbReference>
<dbReference type="SUPFAM" id="SSF51161">
    <property type="entry name" value="Trimeric LpxA-like enzymes"/>
    <property type="match status" value="1"/>
</dbReference>
<organism>
    <name type="scientific">Escherichia coli O6:H1 (strain CFT073 / ATCC 700928 / UPEC)</name>
    <dbReference type="NCBI Taxonomy" id="199310"/>
    <lineage>
        <taxon>Bacteria</taxon>
        <taxon>Pseudomonadati</taxon>
        <taxon>Pseudomonadota</taxon>
        <taxon>Gammaproteobacteria</taxon>
        <taxon>Enterobacterales</taxon>
        <taxon>Enterobacteriaceae</taxon>
        <taxon>Escherichia</taxon>
    </lineage>
</organism>
<evidence type="ECO:0000255" key="1">
    <source>
        <dbReference type="HAMAP-Rule" id="MF_01525"/>
    </source>
</evidence>
<evidence type="ECO:0000256" key="2">
    <source>
        <dbReference type="SAM" id="MobiDB-lite"/>
    </source>
</evidence>
<evidence type="ECO:0000305" key="3"/>
<sequence>MSYYAFEGLIPVVHPTAFVHPSAVLIGDVIVGAGVYIGPLASLRGDYGRLIVQAGANIQDGCIMHGYCDTDTIVGENGHIGHGAILHGCVIGRDALVGMNSVIMDGAVIGEESIVAAMSFVKAGFRGEKRQLLMGTPARAVRSVSDDELHWKRLNTKEYQDLVGRCHAALHETQPLRQMEENRPRLQGTTDVTPKR</sequence>
<gene>
    <name evidence="1" type="primary">caiE</name>
    <name type="ordered locus">c0044</name>
</gene>
<protein>
    <recommendedName>
        <fullName evidence="1">Carnitine operon protein CaiE</fullName>
    </recommendedName>
</protein>